<sequence length="1069" mass="118647">MEACTSKSSLLLHSPLRTIPKLRLCTTISSEDVAYGRCNLTDQHLQIEGKNYSKNTFDHIFRTDATQDDMYSAFLSDMINSVFAGNDATVLAMGAKANGKDERLYGNSVSRNGLIQMAITQLMNAIDDNKDPEERIQVRMSAIMVSQKDSSIVDLLSPFNDPRHRVVKLVDDARTGVFLDNESEIRVETIDQALFYLNTAVDHRLIQDEQTHRTSHVFISLSLYSYKMGDKMQGGRRRLCFLDMGIGERNSTNGGMTMPALGSILLAMVQRNKHIPSRDSSVCQLIRCALSTSRFTTFLFSFGSKNDDNENIAHLACKIARTRVKSVMGHGRKPSGTFSSGTMDSNGSSSSFGTTTITPGGTPRTQRRFELESGSELSAAETVIFLGPSCSRTTSPASTTMPSTPTSIRPLHRTTRNHSGVDPVSKPLSVETKSSPTHNCHDGCIHSIPPMLRGHTPFLSPHLKLYDELCSPPNSSCASPVLSAPNAFGGKTAERRDDFGIMIAQPHIPLMKAKSKYNLDDGKMKQIMQWMETSEAPPILFSSPCYENSATSLDELRECVGILSHPLEDIIEQEEESMRTSTATTGGSKKDHPLRILSKQDLNIDSEAKDKDETELELVMAASLSSMRSHDILAKLEAMRNAQSGQNGQNGNIGTSQSNTDMDVSEMDMYRRASHLEEYAMQRVREIEDNKMKNKKKVKLGLNCCQQQSMISSGSTVVDWSQIERKKEREKDAMEEEKRKEVLRERRAKLKITELEIKRERNMIDKELDDKKGIANSIARQLQHFSLSPCRGGRTHRSVSTHRIDPPNASLPSTPTMSHKKMIGGSLAKLSASGASGSGPPSSPSLGYHQSLPRHSKLPTAVNGRRSSAERDRKTSKNSRNASSKERRSSGSKEELQWRSPYAQMTSPKTYGGPGTSSSGRGSSAPGSDFETPVVSATEKTANGTMPRSKRQSYSASSGYESANDYHIYATTNKKANILEKKRNEEKLFLVRQADEIRHRQWQLKKELEEAKRAIGQEEDAKMIANSSDQRLNGLSRTTMVDAMLQENRILEKRLIACRNHSMLVTTFI</sequence>
<protein>
    <recommendedName>
        <fullName>Kinesin-like protein vab-8</fullName>
    </recommendedName>
    <alternativeName>
        <fullName>Variable abnormal morphology protein 8</fullName>
    </alternativeName>
</protein>
<organism>
    <name type="scientific">Caenorhabditis briggsae</name>
    <dbReference type="NCBI Taxonomy" id="6238"/>
    <lineage>
        <taxon>Eukaryota</taxon>
        <taxon>Metazoa</taxon>
        <taxon>Ecdysozoa</taxon>
        <taxon>Nematoda</taxon>
        <taxon>Chromadorea</taxon>
        <taxon>Rhabditida</taxon>
        <taxon>Rhabditina</taxon>
        <taxon>Rhabditomorpha</taxon>
        <taxon>Rhabditoidea</taxon>
        <taxon>Rhabditidae</taxon>
        <taxon>Peloderinae</taxon>
        <taxon>Caenorhabditis</taxon>
    </lineage>
</organism>
<accession>Q60LV7</accession>
<accession>A8Y3Z4</accession>
<dbReference type="EMBL" id="HE601533">
    <property type="protein sequence ID" value="CAP39613.3"/>
    <property type="molecule type" value="Genomic_DNA"/>
</dbReference>
<dbReference type="SMR" id="Q60LV7"/>
<dbReference type="FunCoup" id="Q60LV7">
    <property type="interactions" value="8"/>
</dbReference>
<dbReference type="STRING" id="6238.Q60LV7"/>
<dbReference type="EnsemblMetazoa" id="CBG23411.1">
    <property type="protein sequence ID" value="CBG23411.1"/>
    <property type="gene ID" value="WBGene00041774"/>
</dbReference>
<dbReference type="WormBase" id="CBG23411">
    <property type="protein sequence ID" value="CBP37578"/>
    <property type="gene ID" value="WBGene00041774"/>
    <property type="gene designation" value="Cbr-vab-8"/>
</dbReference>
<dbReference type="eggNOG" id="KOG4280">
    <property type="taxonomic scope" value="Eukaryota"/>
</dbReference>
<dbReference type="HOGENOM" id="CLU_287890_0_0_1"/>
<dbReference type="InParanoid" id="Q60LV7"/>
<dbReference type="OMA" id="HLACKIA"/>
<dbReference type="Proteomes" id="UP000008549">
    <property type="component" value="Unassembled WGS sequence"/>
</dbReference>
<dbReference type="GO" id="GO:0005874">
    <property type="term" value="C:microtubule"/>
    <property type="evidence" value="ECO:0007669"/>
    <property type="project" value="UniProtKB-KW"/>
</dbReference>
<dbReference type="GO" id="GO:0005865">
    <property type="term" value="C:striated muscle thin filament"/>
    <property type="evidence" value="ECO:0007669"/>
    <property type="project" value="EnsemblMetazoa"/>
</dbReference>
<dbReference type="GO" id="GO:0005524">
    <property type="term" value="F:ATP binding"/>
    <property type="evidence" value="ECO:0007669"/>
    <property type="project" value="UniProtKB-KW"/>
</dbReference>
<dbReference type="GO" id="GO:0008017">
    <property type="term" value="F:microtubule binding"/>
    <property type="evidence" value="ECO:0007669"/>
    <property type="project" value="InterPro"/>
</dbReference>
<dbReference type="GO" id="GO:0003777">
    <property type="term" value="F:microtubule motor activity"/>
    <property type="evidence" value="ECO:0007669"/>
    <property type="project" value="InterPro"/>
</dbReference>
<dbReference type="GO" id="GO:0007411">
    <property type="term" value="P:axon guidance"/>
    <property type="evidence" value="ECO:0007669"/>
    <property type="project" value="EnsemblMetazoa"/>
</dbReference>
<dbReference type="GO" id="GO:0018991">
    <property type="term" value="P:egg-laying behavior"/>
    <property type="evidence" value="ECO:0007669"/>
    <property type="project" value="EnsemblMetazoa"/>
</dbReference>
<dbReference type="GO" id="GO:0040011">
    <property type="term" value="P:locomotion"/>
    <property type="evidence" value="ECO:0007669"/>
    <property type="project" value="EnsemblMetazoa"/>
</dbReference>
<dbReference type="GO" id="GO:0008078">
    <property type="term" value="P:mesodermal cell migration"/>
    <property type="evidence" value="ECO:0007669"/>
    <property type="project" value="EnsemblMetazoa"/>
</dbReference>
<dbReference type="GO" id="GO:0007018">
    <property type="term" value="P:microtubule-based movement"/>
    <property type="evidence" value="ECO:0007669"/>
    <property type="project" value="InterPro"/>
</dbReference>
<dbReference type="GO" id="GO:1905484">
    <property type="term" value="P:negative regulation of motor neuron migration"/>
    <property type="evidence" value="ECO:0007669"/>
    <property type="project" value="EnsemblMetazoa"/>
</dbReference>
<dbReference type="GO" id="GO:0001764">
    <property type="term" value="P:neuron migration"/>
    <property type="evidence" value="ECO:0007669"/>
    <property type="project" value="EnsemblMetazoa"/>
</dbReference>
<dbReference type="GO" id="GO:0040025">
    <property type="term" value="P:vulval development"/>
    <property type="evidence" value="ECO:0007669"/>
    <property type="project" value="EnsemblMetazoa"/>
</dbReference>
<dbReference type="Gene3D" id="3.40.850.10">
    <property type="entry name" value="Kinesin motor domain"/>
    <property type="match status" value="1"/>
</dbReference>
<dbReference type="InterPro" id="IPR027640">
    <property type="entry name" value="Kinesin-like_fam"/>
</dbReference>
<dbReference type="InterPro" id="IPR001752">
    <property type="entry name" value="Kinesin_motor_dom"/>
</dbReference>
<dbReference type="InterPro" id="IPR036961">
    <property type="entry name" value="Kinesin_motor_dom_sf"/>
</dbReference>
<dbReference type="InterPro" id="IPR027417">
    <property type="entry name" value="P-loop_NTPase"/>
</dbReference>
<dbReference type="PANTHER" id="PTHR21608">
    <property type="entry name" value="KINESIN-LIKE PROTEIN CG14535"/>
    <property type="match status" value="1"/>
</dbReference>
<dbReference type="PANTHER" id="PTHR21608:SF7">
    <property type="entry name" value="KINESIN-LIKE PROTEIN CG14535"/>
    <property type="match status" value="1"/>
</dbReference>
<dbReference type="Pfam" id="PF00225">
    <property type="entry name" value="Kinesin"/>
    <property type="match status" value="1"/>
</dbReference>
<dbReference type="SMART" id="SM00129">
    <property type="entry name" value="KISc"/>
    <property type="match status" value="1"/>
</dbReference>
<dbReference type="SUPFAM" id="SSF52540">
    <property type="entry name" value="P-loop containing nucleoside triphosphate hydrolases"/>
    <property type="match status" value="1"/>
</dbReference>
<dbReference type="PROSITE" id="PS50067">
    <property type="entry name" value="KINESIN_MOTOR_2"/>
    <property type="match status" value="1"/>
</dbReference>
<reference key="1">
    <citation type="journal article" date="2003" name="PLoS Biol.">
        <title>The genome sequence of Caenorhabditis briggsae: a platform for comparative genomics.</title>
        <authorList>
            <person name="Stein L.D."/>
            <person name="Bao Z."/>
            <person name="Blasiar D."/>
            <person name="Blumenthal T."/>
            <person name="Brent M.R."/>
            <person name="Chen N."/>
            <person name="Chinwalla A."/>
            <person name="Clarke L."/>
            <person name="Clee C."/>
            <person name="Coghlan A."/>
            <person name="Coulson A."/>
            <person name="D'Eustachio P."/>
            <person name="Fitch D.H.A."/>
            <person name="Fulton L.A."/>
            <person name="Fulton R.E."/>
            <person name="Griffiths-Jones S."/>
            <person name="Harris T.W."/>
            <person name="Hillier L.W."/>
            <person name="Kamath R."/>
            <person name="Kuwabara P.E."/>
            <person name="Mardis E.R."/>
            <person name="Marra M.A."/>
            <person name="Miner T.L."/>
            <person name="Minx P."/>
            <person name="Mullikin J.C."/>
            <person name="Plumb R.W."/>
            <person name="Rogers J."/>
            <person name="Schein J.E."/>
            <person name="Sohrmann M."/>
            <person name="Spieth J."/>
            <person name="Stajich J.E."/>
            <person name="Wei C."/>
            <person name="Willey D."/>
            <person name="Wilson R.K."/>
            <person name="Durbin R.M."/>
            <person name="Waterston R.H."/>
        </authorList>
    </citation>
    <scope>NUCLEOTIDE SEQUENCE [LARGE SCALE GENOMIC DNA]</scope>
    <source>
        <strain>AF16</strain>
    </source>
</reference>
<feature type="chain" id="PRO_0000307305" description="Kinesin-like protein vab-8">
    <location>
        <begin position="1"/>
        <end position="1069"/>
    </location>
</feature>
<feature type="domain" description="Kinesin motor" evidence="4">
    <location>
        <begin position="15"/>
        <end position="325"/>
    </location>
</feature>
<feature type="region of interest" description="Disordered" evidence="5">
    <location>
        <begin position="328"/>
        <end position="374"/>
    </location>
</feature>
<feature type="region of interest" description="Interaction with unc-51" evidence="1">
    <location>
        <begin position="331"/>
        <end position="517"/>
    </location>
</feature>
<feature type="region of interest" description="Disordered" evidence="5">
    <location>
        <begin position="391"/>
        <end position="436"/>
    </location>
</feature>
<feature type="region of interest" description="Interaction with unc-73" evidence="1">
    <location>
        <begin position="403"/>
        <end position="877"/>
    </location>
</feature>
<feature type="region of interest" description="Interaction with unc-51" evidence="1">
    <location>
        <begin position="517"/>
        <end position="719"/>
    </location>
</feature>
<feature type="region of interest" description="Disordered" evidence="5">
    <location>
        <begin position="572"/>
        <end position="598"/>
    </location>
</feature>
<feature type="region of interest" description="Disordered" evidence="5">
    <location>
        <begin position="786"/>
        <end position="960"/>
    </location>
</feature>
<feature type="coiled-coil region" evidence="3">
    <location>
        <begin position="719"/>
        <end position="769"/>
    </location>
</feature>
<feature type="coiled-coil region" evidence="3">
    <location>
        <begin position="990"/>
        <end position="1027"/>
    </location>
</feature>
<feature type="compositionally biased region" description="Low complexity" evidence="5">
    <location>
        <begin position="339"/>
        <end position="364"/>
    </location>
</feature>
<feature type="compositionally biased region" description="Low complexity" evidence="5">
    <location>
        <begin position="391"/>
        <end position="407"/>
    </location>
</feature>
<feature type="compositionally biased region" description="Low complexity" evidence="5">
    <location>
        <begin position="824"/>
        <end position="847"/>
    </location>
</feature>
<feature type="compositionally biased region" description="Basic and acidic residues" evidence="5">
    <location>
        <begin position="883"/>
        <end position="897"/>
    </location>
</feature>
<feature type="compositionally biased region" description="Low complexity" evidence="5">
    <location>
        <begin position="906"/>
        <end position="928"/>
    </location>
</feature>
<feature type="compositionally biased region" description="Polar residues" evidence="5">
    <location>
        <begin position="938"/>
        <end position="960"/>
    </location>
</feature>
<evidence type="ECO:0000250" key="1"/>
<evidence type="ECO:0000250" key="2">
    <source>
        <dbReference type="UniProtKB" id="Q21441"/>
    </source>
</evidence>
<evidence type="ECO:0000255" key="3"/>
<evidence type="ECO:0000255" key="4">
    <source>
        <dbReference type="PROSITE-ProRule" id="PRU00283"/>
    </source>
</evidence>
<evidence type="ECO:0000256" key="5">
    <source>
        <dbReference type="SAM" id="MobiDB-lite"/>
    </source>
</evidence>
<comment type="function">
    <text evidence="2">Required for posterior migration of cells and axon growth cones during nervous system assembly (By similarity). In PLM neuron, regulates innexin unc-9 gap junction turnover by suppressing unc-9 transport out of the gap junctions (By similarity).</text>
</comment>
<comment type="subunit">
    <text evidence="1">Interacts with unc-51 and unc-73.</text>
</comment>
<comment type="subcellular location">
    <subcellularLocation>
        <location evidence="1">Cytoplasm</location>
        <location evidence="1">Cytoskeleton</location>
    </subcellularLocation>
</comment>
<comment type="PTM">
    <text evidence="1">Phosphorylated by unc-51.</text>
</comment>
<comment type="similarity">
    <text evidence="4">Belongs to the TRAFAC class myosin-kinesin ATPase superfamily. Kinesin family. KIF26 subfamily.</text>
</comment>
<proteinExistence type="inferred from homology"/>
<keyword id="KW-0067">ATP-binding</keyword>
<keyword id="KW-0175">Coiled coil</keyword>
<keyword id="KW-0963">Cytoplasm</keyword>
<keyword id="KW-0206">Cytoskeleton</keyword>
<keyword id="KW-0217">Developmental protein</keyword>
<keyword id="KW-0221">Differentiation</keyword>
<keyword id="KW-0493">Microtubule</keyword>
<keyword id="KW-0505">Motor protein</keyword>
<keyword id="KW-0524">Neurogenesis</keyword>
<keyword id="KW-0547">Nucleotide-binding</keyword>
<keyword id="KW-0597">Phosphoprotein</keyword>
<keyword id="KW-1185">Reference proteome</keyword>
<name>KI26L_CAEBR</name>
<gene>
    <name type="primary">vab-8</name>
    <name type="ORF">CBG23411</name>
</gene>